<comment type="function">
    <text evidence="1">Specifically methylates the N7 position of guanine in position 527 of 16S rRNA.</text>
</comment>
<comment type="catalytic activity">
    <reaction evidence="1">
        <text>guanosine(527) in 16S rRNA + S-adenosyl-L-methionine = N(7)-methylguanosine(527) in 16S rRNA + S-adenosyl-L-homocysteine</text>
        <dbReference type="Rhea" id="RHEA:42732"/>
        <dbReference type="Rhea" id="RHEA-COMP:10209"/>
        <dbReference type="Rhea" id="RHEA-COMP:10210"/>
        <dbReference type="ChEBI" id="CHEBI:57856"/>
        <dbReference type="ChEBI" id="CHEBI:59789"/>
        <dbReference type="ChEBI" id="CHEBI:74269"/>
        <dbReference type="ChEBI" id="CHEBI:74480"/>
        <dbReference type="EC" id="2.1.1.170"/>
    </reaction>
</comment>
<comment type="subcellular location">
    <subcellularLocation>
        <location evidence="1">Cytoplasm</location>
    </subcellularLocation>
</comment>
<comment type="similarity">
    <text evidence="1">Belongs to the methyltransferase superfamily. RNA methyltransferase RsmG family.</text>
</comment>
<accession>Q28VZ4</accession>
<keyword id="KW-0963">Cytoplasm</keyword>
<keyword id="KW-0489">Methyltransferase</keyword>
<keyword id="KW-1185">Reference proteome</keyword>
<keyword id="KW-0698">rRNA processing</keyword>
<keyword id="KW-0949">S-adenosyl-L-methionine</keyword>
<keyword id="KW-0808">Transferase</keyword>
<proteinExistence type="inferred from homology"/>
<name>RSMG_JANSC</name>
<protein>
    <recommendedName>
        <fullName evidence="1">Ribosomal RNA small subunit methyltransferase G</fullName>
        <ecNumber evidence="1">2.1.1.170</ecNumber>
    </recommendedName>
    <alternativeName>
        <fullName evidence="1">16S rRNA 7-methylguanosine methyltransferase</fullName>
        <shortName evidence="1">16S rRNA m7G methyltransferase</shortName>
    </alternativeName>
</protein>
<gene>
    <name evidence="1" type="primary">rsmG</name>
    <name type="ordered locus">Jann_0201</name>
</gene>
<evidence type="ECO:0000255" key="1">
    <source>
        <dbReference type="HAMAP-Rule" id="MF_00074"/>
    </source>
</evidence>
<feature type="chain" id="PRO_0000335364" description="Ribosomal RNA small subunit methyltransferase G">
    <location>
        <begin position="1"/>
        <end position="211"/>
    </location>
</feature>
<feature type="binding site" evidence="1">
    <location>
        <position position="73"/>
    </location>
    <ligand>
        <name>S-adenosyl-L-methionine</name>
        <dbReference type="ChEBI" id="CHEBI:59789"/>
    </ligand>
</feature>
<feature type="binding site" evidence="1">
    <location>
        <position position="78"/>
    </location>
    <ligand>
        <name>S-adenosyl-L-methionine</name>
        <dbReference type="ChEBI" id="CHEBI:59789"/>
    </ligand>
</feature>
<feature type="binding site" evidence="1">
    <location>
        <position position="141"/>
    </location>
    <ligand>
        <name>S-adenosyl-L-methionine</name>
        <dbReference type="ChEBI" id="CHEBI:59789"/>
    </ligand>
</feature>
<organism>
    <name type="scientific">Jannaschia sp. (strain CCS1)</name>
    <dbReference type="NCBI Taxonomy" id="290400"/>
    <lineage>
        <taxon>Bacteria</taxon>
        <taxon>Pseudomonadati</taxon>
        <taxon>Pseudomonadota</taxon>
        <taxon>Alphaproteobacteria</taxon>
        <taxon>Rhodobacterales</taxon>
        <taxon>Roseobacteraceae</taxon>
        <taxon>Jannaschia</taxon>
    </lineage>
</organism>
<sequence length="211" mass="23390">MNESDAKHWLSDRVSRETMDRLELYHTLLTRWQKTINLIAPSTIDSVWVRHIMDSAQLFDLASKPAHRWLDLGSGGGFPGLVVAAMAKDVCPNLTVTLVESDIRKCGFLREAARQMDLSVKILSRRIGDVPAQTADVISARALSSLSNLIGHARPHMTPKTCLLFPKGMSYVAELETLPDDWQVNAEVIESVTDSDAVILRFRGAHLEGEG</sequence>
<reference key="1">
    <citation type="submission" date="2006-02" db="EMBL/GenBank/DDBJ databases">
        <title>Complete sequence of chromosome of Jannaschia sp. CCS1.</title>
        <authorList>
            <consortium name="US DOE Joint Genome Institute"/>
            <person name="Copeland A."/>
            <person name="Lucas S."/>
            <person name="Lapidus A."/>
            <person name="Barry K."/>
            <person name="Detter J.C."/>
            <person name="Glavina del Rio T."/>
            <person name="Hammon N."/>
            <person name="Israni S."/>
            <person name="Pitluck S."/>
            <person name="Brettin T."/>
            <person name="Bruce D."/>
            <person name="Han C."/>
            <person name="Tapia R."/>
            <person name="Gilna P."/>
            <person name="Chertkov O."/>
            <person name="Saunders E."/>
            <person name="Schmutz J."/>
            <person name="Larimer F."/>
            <person name="Land M."/>
            <person name="Kyrpides N."/>
            <person name="Lykidis A."/>
            <person name="Moran M.A."/>
            <person name="Belas R."/>
            <person name="Ye W."/>
            <person name="Buchan A."/>
            <person name="Gonzalez J.M."/>
            <person name="Schell M.A."/>
            <person name="Richardson P."/>
        </authorList>
    </citation>
    <scope>NUCLEOTIDE SEQUENCE [LARGE SCALE GENOMIC DNA]</scope>
    <source>
        <strain>CCS1</strain>
    </source>
</reference>
<dbReference type="EC" id="2.1.1.170" evidence="1"/>
<dbReference type="EMBL" id="CP000264">
    <property type="protein sequence ID" value="ABD53118.1"/>
    <property type="molecule type" value="Genomic_DNA"/>
</dbReference>
<dbReference type="RefSeq" id="WP_011453327.1">
    <property type="nucleotide sequence ID" value="NC_007802.1"/>
</dbReference>
<dbReference type="SMR" id="Q28VZ4"/>
<dbReference type="STRING" id="290400.Jann_0201"/>
<dbReference type="KEGG" id="jan:Jann_0201"/>
<dbReference type="eggNOG" id="COG0357">
    <property type="taxonomic scope" value="Bacteria"/>
</dbReference>
<dbReference type="HOGENOM" id="CLU_065341_1_1_5"/>
<dbReference type="OrthoDB" id="9808773at2"/>
<dbReference type="Proteomes" id="UP000008326">
    <property type="component" value="Chromosome"/>
</dbReference>
<dbReference type="GO" id="GO:0005829">
    <property type="term" value="C:cytosol"/>
    <property type="evidence" value="ECO:0007669"/>
    <property type="project" value="TreeGrafter"/>
</dbReference>
<dbReference type="GO" id="GO:0070043">
    <property type="term" value="F:rRNA (guanine-N7-)-methyltransferase activity"/>
    <property type="evidence" value="ECO:0007669"/>
    <property type="project" value="UniProtKB-UniRule"/>
</dbReference>
<dbReference type="Gene3D" id="3.40.50.150">
    <property type="entry name" value="Vaccinia Virus protein VP39"/>
    <property type="match status" value="1"/>
</dbReference>
<dbReference type="HAMAP" id="MF_00074">
    <property type="entry name" value="16SrRNA_methyltr_G"/>
    <property type="match status" value="1"/>
</dbReference>
<dbReference type="InterPro" id="IPR003682">
    <property type="entry name" value="rRNA_ssu_MeTfrase_G"/>
</dbReference>
<dbReference type="InterPro" id="IPR029063">
    <property type="entry name" value="SAM-dependent_MTases_sf"/>
</dbReference>
<dbReference type="NCBIfam" id="TIGR00138">
    <property type="entry name" value="rsmG_gidB"/>
    <property type="match status" value="1"/>
</dbReference>
<dbReference type="PANTHER" id="PTHR31760">
    <property type="entry name" value="S-ADENOSYL-L-METHIONINE-DEPENDENT METHYLTRANSFERASES SUPERFAMILY PROTEIN"/>
    <property type="match status" value="1"/>
</dbReference>
<dbReference type="PANTHER" id="PTHR31760:SF0">
    <property type="entry name" value="S-ADENOSYL-L-METHIONINE-DEPENDENT METHYLTRANSFERASES SUPERFAMILY PROTEIN"/>
    <property type="match status" value="1"/>
</dbReference>
<dbReference type="Pfam" id="PF02527">
    <property type="entry name" value="GidB"/>
    <property type="match status" value="1"/>
</dbReference>
<dbReference type="PIRSF" id="PIRSF003078">
    <property type="entry name" value="GidB"/>
    <property type="match status" value="1"/>
</dbReference>
<dbReference type="SUPFAM" id="SSF53335">
    <property type="entry name" value="S-adenosyl-L-methionine-dependent methyltransferases"/>
    <property type="match status" value="1"/>
</dbReference>